<accession>P42284</accession>
<accession>Q867M9</accession>
<accession>Q867R1</accession>
<accession>Q868A5</accession>
<proteinExistence type="evidence at protein level"/>
<comment type="function">
    <text evidence="3 6">Putative transcription factor required for axon growth and guidance in the central and peripheral nervous systems. Repels CNS axons away from the midline by promoting the expression of the midline repellent sli and its receptor robo.</text>
</comment>
<comment type="subcellular location">
    <subcellularLocation>
        <location evidence="6">Nucleus</location>
    </subcellularLocation>
</comment>
<comment type="alternative products">
    <event type="alternative splicing"/>
    <isoform>
        <id>P42284-2</id>
        <name>V</name>
        <name>Ohsako-G</name>
        <sequence type="displayed"/>
    </isoform>
    <isoform>
        <id>P42284-3</id>
        <name>H</name>
        <name>Ohsako-M</name>
        <sequence type="described" ref="VSP_015404 VSP_015406"/>
    </isoform>
    <isoform>
        <id>P42284-1</id>
        <name>M</name>
        <name>Short</name>
        <name>Ohsako-A</name>
        <sequence type="described" ref="VSP_015403 VSP_015405"/>
    </isoform>
    <isoform>
        <id>Q7KQZ4-2</id>
        <name>A</name>
        <name>Ohsako-D</name>
        <sequence type="external"/>
    </isoform>
    <isoform>
        <id>Q7KQZ4-1</id>
        <name>B</name>
        <name>C</name>
        <name>Ohsako-L</name>
        <sequence type="external"/>
    </isoform>
    <isoform>
        <id>Q7KQZ4-3</id>
        <name>D</name>
        <name>E</name>
        <name>Ohsako-F</name>
        <sequence type="external"/>
    </isoform>
    <isoform>
        <id>Q867Z4-2</id>
        <name>F</name>
        <name>Ohsako-I</name>
        <sequence type="external"/>
    </isoform>
    <isoform>
        <id>P42283-1</id>
        <name>G</name>
        <name>Long</name>
        <name>Ohsako-T</name>
        <name>R</name>
        <sequence type="external"/>
    </isoform>
    <isoform>
        <id>Q867Z4-1</id>
        <name>I</name>
        <name>Ohsako-K</name>
        <sequence type="external"/>
    </isoform>
    <isoform>
        <id>Q9V5M6-2</id>
        <name>J</name>
        <name>Ohsako-O</name>
        <sequence type="external"/>
    </isoform>
    <isoform>
        <id>Q867Z4-3</id>
        <name>K</name>
        <name>Ohsako-H</name>
        <sequence type="external"/>
    </isoform>
    <isoform>
        <id>Q7KQZ4-4</id>
        <name>L</name>
        <name>Ohsako-C</name>
        <sequence type="external"/>
    </isoform>
    <isoform>
        <id>Q9V5M3-1</id>
        <name>N</name>
        <sequence type="external"/>
    </isoform>
    <isoform>
        <id>Q9V5M3-2</id>
        <name>O</name>
        <name>Ohsako-P</name>
        <sequence type="external"/>
    </isoform>
    <isoform>
        <id>Q9V5M6-1</id>
        <name>P</name>
        <name>Ohsako-N</name>
        <sequence type="external"/>
    </isoform>
    <isoform>
        <id>Q9V5M6-3</id>
        <name>Q</name>
        <name>Ohsako-B</name>
        <sequence type="external"/>
    </isoform>
    <isoform>
        <id>Q9V5M6-4</id>
        <name>S</name>
        <sequence type="external"/>
    </isoform>
    <isoform>
        <id>Q867Z4-5</id>
        <name>T</name>
        <name>U</name>
        <name>Ohsako-J</name>
        <sequence type="external"/>
    </isoform>
    <isoform>
        <id>Q9V5M3-3</id>
        <name>W</name>
        <name>Ohsako-Q</name>
        <sequence type="external"/>
    </isoform>
    <isoform>
        <id>Q9V5M3-4</id>
        <name>X</name>
        <name>Ohsako-S</name>
        <sequence type="external"/>
    </isoform>
    <isoform>
        <id>Q9V5M3-5</id>
        <name>Y</name>
        <name>Ohsako-R</name>
        <sequence type="external"/>
    </isoform>
    <isoform>
        <id>Q9V5M6-5</id>
        <name>Z</name>
        <name>Ohsako-E</name>
        <sequence type="external"/>
    </isoform>
    <text>Some isoforms may be generated by alternative trans-splicing of exons sequentially encoded by the same DNA strand.</text>
</comment>
<comment type="tissue specificity">
    <text evidence="6">Mostly neuronal.</text>
</comment>
<comment type="developmental stage">
    <text evidence="4 5 6">Expressed both maternally and zygotically. At least one isoform is present at each developmental stage.</text>
</comment>
<reference key="1">
    <citation type="journal article" date="1994" name="Development">
        <title>Lola encodes a putative transcription factor required for axon growth and guidance in Drosophila.</title>
        <authorList>
            <person name="Giniger E."/>
            <person name="Tietje K."/>
            <person name="Jan L.Y."/>
            <person name="Jan Y.N."/>
        </authorList>
    </citation>
    <scope>NUCLEOTIDE SEQUENCE [MRNA] (ISOFORM M)</scope>
    <scope>FUNCTION</scope>
    <scope>SUBCELLULAR LOCATION</scope>
    <scope>TISSUE SPECIFICITY</scope>
    <scope>DEVELOPMENTAL STAGE</scope>
</reference>
<reference key="2">
    <citation type="journal article" date="2003" name="Gene">
        <title>Drosophila lola encodes a family of BTB-transcription regulators with highly variable C-terminal domains containing zinc finger motifs.</title>
        <authorList>
            <person name="Ohsako T."/>
            <person name="Horiuchi T."/>
            <person name="Matsuo T."/>
            <person name="Komaya S."/>
            <person name="Aigaki T."/>
        </authorList>
    </citation>
    <scope>NUCLEOTIDE SEQUENCE [MRNA] (ISOFORMS H; M AND V)</scope>
    <source>
        <strain>Canton-S</strain>
        <tissue>Embryo</tissue>
        <tissue>Larva</tissue>
        <tissue>Pupae</tissue>
    </source>
</reference>
<reference key="3">
    <citation type="journal article" date="2000" name="Science">
        <title>The genome sequence of Drosophila melanogaster.</title>
        <authorList>
            <person name="Adams M.D."/>
            <person name="Celniker S.E."/>
            <person name="Holt R.A."/>
            <person name="Evans C.A."/>
            <person name="Gocayne J.D."/>
            <person name="Amanatides P.G."/>
            <person name="Scherer S.E."/>
            <person name="Li P.W."/>
            <person name="Hoskins R.A."/>
            <person name="Galle R.F."/>
            <person name="George R.A."/>
            <person name="Lewis S.E."/>
            <person name="Richards S."/>
            <person name="Ashburner M."/>
            <person name="Henderson S.N."/>
            <person name="Sutton G.G."/>
            <person name="Wortman J.R."/>
            <person name="Yandell M.D."/>
            <person name="Zhang Q."/>
            <person name="Chen L.X."/>
            <person name="Brandon R.C."/>
            <person name="Rogers Y.-H.C."/>
            <person name="Blazej R.G."/>
            <person name="Champe M."/>
            <person name="Pfeiffer B.D."/>
            <person name="Wan K.H."/>
            <person name="Doyle C."/>
            <person name="Baxter E.G."/>
            <person name="Helt G."/>
            <person name="Nelson C.R."/>
            <person name="Miklos G.L.G."/>
            <person name="Abril J.F."/>
            <person name="Agbayani A."/>
            <person name="An H.-J."/>
            <person name="Andrews-Pfannkoch C."/>
            <person name="Baldwin D."/>
            <person name="Ballew R.M."/>
            <person name="Basu A."/>
            <person name="Baxendale J."/>
            <person name="Bayraktaroglu L."/>
            <person name="Beasley E.M."/>
            <person name="Beeson K.Y."/>
            <person name="Benos P.V."/>
            <person name="Berman B.P."/>
            <person name="Bhandari D."/>
            <person name="Bolshakov S."/>
            <person name="Borkova D."/>
            <person name="Botchan M.R."/>
            <person name="Bouck J."/>
            <person name="Brokstein P."/>
            <person name="Brottier P."/>
            <person name="Burtis K.C."/>
            <person name="Busam D.A."/>
            <person name="Butler H."/>
            <person name="Cadieu E."/>
            <person name="Center A."/>
            <person name="Chandra I."/>
            <person name="Cherry J.M."/>
            <person name="Cawley S."/>
            <person name="Dahlke C."/>
            <person name="Davenport L.B."/>
            <person name="Davies P."/>
            <person name="de Pablos B."/>
            <person name="Delcher A."/>
            <person name="Deng Z."/>
            <person name="Mays A.D."/>
            <person name="Dew I."/>
            <person name="Dietz S.M."/>
            <person name="Dodson K."/>
            <person name="Doup L.E."/>
            <person name="Downes M."/>
            <person name="Dugan-Rocha S."/>
            <person name="Dunkov B.C."/>
            <person name="Dunn P."/>
            <person name="Durbin K.J."/>
            <person name="Evangelista C.C."/>
            <person name="Ferraz C."/>
            <person name="Ferriera S."/>
            <person name="Fleischmann W."/>
            <person name="Fosler C."/>
            <person name="Gabrielian A.E."/>
            <person name="Garg N.S."/>
            <person name="Gelbart W.M."/>
            <person name="Glasser K."/>
            <person name="Glodek A."/>
            <person name="Gong F."/>
            <person name="Gorrell J.H."/>
            <person name="Gu Z."/>
            <person name="Guan P."/>
            <person name="Harris M."/>
            <person name="Harris N.L."/>
            <person name="Harvey D.A."/>
            <person name="Heiman T.J."/>
            <person name="Hernandez J.R."/>
            <person name="Houck J."/>
            <person name="Hostin D."/>
            <person name="Houston K.A."/>
            <person name="Howland T.J."/>
            <person name="Wei M.-H."/>
            <person name="Ibegwam C."/>
            <person name="Jalali M."/>
            <person name="Kalush F."/>
            <person name="Karpen G.H."/>
            <person name="Ke Z."/>
            <person name="Kennison J.A."/>
            <person name="Ketchum K.A."/>
            <person name="Kimmel B.E."/>
            <person name="Kodira C.D."/>
            <person name="Kraft C.L."/>
            <person name="Kravitz S."/>
            <person name="Kulp D."/>
            <person name="Lai Z."/>
            <person name="Lasko P."/>
            <person name="Lei Y."/>
            <person name="Levitsky A.A."/>
            <person name="Li J.H."/>
            <person name="Li Z."/>
            <person name="Liang Y."/>
            <person name="Lin X."/>
            <person name="Liu X."/>
            <person name="Mattei B."/>
            <person name="McIntosh T.C."/>
            <person name="McLeod M.P."/>
            <person name="McPherson D."/>
            <person name="Merkulov G."/>
            <person name="Milshina N.V."/>
            <person name="Mobarry C."/>
            <person name="Morris J."/>
            <person name="Moshrefi A."/>
            <person name="Mount S.M."/>
            <person name="Moy M."/>
            <person name="Murphy B."/>
            <person name="Murphy L."/>
            <person name="Muzny D.M."/>
            <person name="Nelson D.L."/>
            <person name="Nelson D.R."/>
            <person name="Nelson K.A."/>
            <person name="Nixon K."/>
            <person name="Nusskern D.R."/>
            <person name="Pacleb J.M."/>
            <person name="Palazzolo M."/>
            <person name="Pittman G.S."/>
            <person name="Pan S."/>
            <person name="Pollard J."/>
            <person name="Puri V."/>
            <person name="Reese M.G."/>
            <person name="Reinert K."/>
            <person name="Remington K."/>
            <person name="Saunders R.D.C."/>
            <person name="Scheeler F."/>
            <person name="Shen H."/>
            <person name="Shue B.C."/>
            <person name="Siden-Kiamos I."/>
            <person name="Simpson M."/>
            <person name="Skupski M.P."/>
            <person name="Smith T.J."/>
            <person name="Spier E."/>
            <person name="Spradling A.C."/>
            <person name="Stapleton M."/>
            <person name="Strong R."/>
            <person name="Sun E."/>
            <person name="Svirskas R."/>
            <person name="Tector C."/>
            <person name="Turner R."/>
            <person name="Venter E."/>
            <person name="Wang A.H."/>
            <person name="Wang X."/>
            <person name="Wang Z.-Y."/>
            <person name="Wassarman D.A."/>
            <person name="Weinstock G.M."/>
            <person name="Weissenbach J."/>
            <person name="Williams S.M."/>
            <person name="Woodage T."/>
            <person name="Worley K.C."/>
            <person name="Wu D."/>
            <person name="Yang S."/>
            <person name="Yao Q.A."/>
            <person name="Ye J."/>
            <person name="Yeh R.-F."/>
            <person name="Zaveri J.S."/>
            <person name="Zhan M."/>
            <person name="Zhang G."/>
            <person name="Zhao Q."/>
            <person name="Zheng L."/>
            <person name="Zheng X.H."/>
            <person name="Zhong F.N."/>
            <person name="Zhong W."/>
            <person name="Zhou X."/>
            <person name="Zhu S.C."/>
            <person name="Zhu X."/>
            <person name="Smith H.O."/>
            <person name="Gibbs R.A."/>
            <person name="Myers E.W."/>
            <person name="Rubin G.M."/>
            <person name="Venter J.C."/>
        </authorList>
    </citation>
    <scope>NUCLEOTIDE SEQUENCE [LARGE SCALE GENOMIC DNA]</scope>
    <source>
        <strain>Berkeley</strain>
    </source>
</reference>
<reference key="4">
    <citation type="journal article" date="2002" name="Genome Biol.">
        <title>Annotation of the Drosophila melanogaster euchromatic genome: a systematic review.</title>
        <authorList>
            <person name="Misra S."/>
            <person name="Crosby M.A."/>
            <person name="Mungall C.J."/>
            <person name="Matthews B.B."/>
            <person name="Campbell K.S."/>
            <person name="Hradecky P."/>
            <person name="Huang Y."/>
            <person name="Kaminker J.S."/>
            <person name="Millburn G.H."/>
            <person name="Prochnik S.E."/>
            <person name="Smith C.D."/>
            <person name="Tupy J.L."/>
            <person name="Whitfield E.J."/>
            <person name="Bayraktaroglu L."/>
            <person name="Berman B.P."/>
            <person name="Bettencourt B.R."/>
            <person name="Celniker S.E."/>
            <person name="de Grey A.D.N.J."/>
            <person name="Drysdale R.A."/>
            <person name="Harris N.L."/>
            <person name="Richter J."/>
            <person name="Russo S."/>
            <person name="Schroeder A.J."/>
            <person name="Shu S.Q."/>
            <person name="Stapleton M."/>
            <person name="Yamada C."/>
            <person name="Ashburner M."/>
            <person name="Gelbart W.M."/>
            <person name="Rubin G.M."/>
            <person name="Lewis S.E."/>
        </authorList>
    </citation>
    <scope>GENOME REANNOTATION</scope>
    <scope>ALTERNATIVE SPLICING</scope>
    <source>
        <strain>Berkeley</strain>
    </source>
</reference>
<reference key="5">
    <citation type="journal article" date="2002" name="Development">
        <title>Lola regulates midline crossing of CNS axons in Drosophila.</title>
        <authorList>
            <person name="Crowner D."/>
            <person name="Madden K."/>
            <person name="Goeke S."/>
            <person name="Giniger E."/>
        </authorList>
    </citation>
    <scope>FUNCTION</scope>
    <scope>MUTAGENESIS OF ALA-107</scope>
</reference>
<reference key="6">
    <citation type="journal article" date="2003" name="Genes Dev.">
        <title>Alternative trans-splicing of constant and variable exons of a Drosophila axon guidance gene, lola.</title>
        <authorList>
            <person name="Horiuchi T."/>
            <person name="Giniger E."/>
            <person name="Aigaki T."/>
        </authorList>
    </citation>
    <scope>TRANS-SPLICING</scope>
</reference>
<reference key="7">
    <citation type="journal article" date="2003" name="J. Biol. Chem.">
        <title>A developmentally regulated splice variant from the complex lola locus encoding multiple different zinc finger domain proteins interacts with the chromosomal kinase JIL-1.</title>
        <authorList>
            <person name="Zhang W."/>
            <person name="Wang Y."/>
            <person name="Long J."/>
            <person name="Girton J."/>
            <person name="Johansen J."/>
            <person name="Johansen K.M."/>
        </authorList>
    </citation>
    <scope>DEVELOPMENTAL STAGE</scope>
</reference>
<reference key="8">
    <citation type="journal article" date="2003" name="Nat. Neurosci.">
        <title>Alternative splicing of lola generates 19 transcription factors controlling axon guidance in Drosophila.</title>
        <authorList>
            <person name="Goeke S."/>
            <person name="Greene E.A."/>
            <person name="Grant P.K."/>
            <person name="Gates M.A."/>
            <person name="Crowner D."/>
            <person name="Aigaki T."/>
            <person name="Giniger E."/>
        </authorList>
    </citation>
    <scope>DEVELOPMENTAL STAGE</scope>
</reference>
<protein>
    <recommendedName>
        <fullName>Longitudinals lacking protein, isoforms H/M/V</fullName>
    </recommendedName>
</protein>
<evidence type="ECO:0000255" key="1">
    <source>
        <dbReference type="PROSITE-ProRule" id="PRU00037"/>
    </source>
</evidence>
<evidence type="ECO:0000256" key="2">
    <source>
        <dbReference type="SAM" id="MobiDB-lite"/>
    </source>
</evidence>
<evidence type="ECO:0000269" key="3">
    <source>
    </source>
</evidence>
<evidence type="ECO:0000269" key="4">
    <source>
    </source>
</evidence>
<evidence type="ECO:0000269" key="5">
    <source>
    </source>
</evidence>
<evidence type="ECO:0000269" key="6">
    <source>
    </source>
</evidence>
<evidence type="ECO:0000303" key="7">
    <source>
    </source>
</evidence>
<evidence type="ECO:0000303" key="8">
    <source>
    </source>
</evidence>
<evidence type="ECO:0000305" key="9"/>
<evidence type="ECO:0000312" key="10">
    <source>
        <dbReference type="FlyBase" id="FBgn0283521"/>
    </source>
</evidence>
<feature type="chain" id="PRO_0000047073" description="Longitudinals lacking protein, isoforms H/M/V">
    <location>
        <begin position="1"/>
        <end position="549"/>
    </location>
</feature>
<feature type="domain" description="BTB" evidence="1">
    <location>
        <begin position="32"/>
        <end position="97"/>
    </location>
</feature>
<feature type="region of interest" description="Disordered" evidence="2">
    <location>
        <begin position="115"/>
        <end position="200"/>
    </location>
</feature>
<feature type="region of interest" description="Disordered" evidence="2">
    <location>
        <begin position="228"/>
        <end position="340"/>
    </location>
</feature>
<feature type="compositionally biased region" description="Low complexity" evidence="2">
    <location>
        <begin position="162"/>
        <end position="175"/>
    </location>
</feature>
<feature type="compositionally biased region" description="Low complexity" evidence="2">
    <location>
        <begin position="228"/>
        <end position="251"/>
    </location>
</feature>
<feature type="compositionally biased region" description="Low complexity" evidence="2">
    <location>
        <begin position="263"/>
        <end position="293"/>
    </location>
</feature>
<feature type="compositionally biased region" description="Low complexity" evidence="2">
    <location>
        <begin position="329"/>
        <end position="340"/>
    </location>
</feature>
<feature type="splice variant" id="VSP_015404" description="In isoform H." evidence="7">
    <original>DVSTNQTVVLPHYSIYHYYSNIYYLLSHTTIYEADRTVSVSCPGKLNCLPQRNDLQETKSVTVL</original>
    <variation>DEAGQNEGGESRIRVRNWLMLADKSIIGKSSDEPSVLHIVLLLSTHRHIISFLLIIQSFIDKIY</variation>
    <location>
        <begin position="455"/>
        <end position="518"/>
    </location>
</feature>
<feature type="splice variant" id="VSP_015403" description="In isoform M." evidence="7 8">
    <original>DVSTNQTVVLP</original>
    <variation>GECLLPLKSII</variation>
    <location>
        <begin position="455"/>
        <end position="465"/>
    </location>
</feature>
<feature type="splice variant" id="VSP_015405" description="In isoform M." evidence="7 8">
    <location>
        <begin position="466"/>
        <end position="549"/>
    </location>
</feature>
<feature type="splice variant" id="VSP_015406" description="In isoform H." evidence="7">
    <location>
        <begin position="519"/>
        <end position="549"/>
    </location>
</feature>
<feature type="mutagenesis site" description="In ORE120; defective in embryonic axon guidance." evidence="3">
    <original>A</original>
    <variation>V</variation>
    <location>
        <position position="107"/>
    </location>
</feature>
<feature type="sequence conflict" description="In Ref. 1; AAA19592." evidence="9" ref="1">
    <original>I</original>
    <variation>YEL</variation>
    <location sequence="P42284-1">
        <position position="465"/>
    </location>
</feature>
<dbReference type="EMBL" id="U07606">
    <property type="protein sequence ID" value="AAA19592.1"/>
    <property type="molecule type" value="mRNA"/>
</dbReference>
<dbReference type="EMBL" id="AB107272">
    <property type="protein sequence ID" value="BAC67577.1"/>
    <property type="molecule type" value="mRNA"/>
</dbReference>
<dbReference type="EMBL" id="AB107278">
    <property type="protein sequence ID" value="BAC67583.1"/>
    <property type="molecule type" value="mRNA"/>
</dbReference>
<dbReference type="EMBL" id="AB107284">
    <property type="protein sequence ID" value="BAC67589.1"/>
    <property type="molecule type" value="mRNA"/>
</dbReference>
<dbReference type="EMBL" id="AB107292">
    <property type="protein sequence ID" value="BAC67597.1"/>
    <property type="molecule type" value="mRNA"/>
</dbReference>
<dbReference type="EMBL" id="AB107298">
    <property type="protein sequence ID" value="BAC67603.1"/>
    <property type="molecule type" value="mRNA"/>
</dbReference>
<dbReference type="EMBL" id="AB107304">
    <property type="protein sequence ID" value="BAC67609.1"/>
    <property type="molecule type" value="mRNA"/>
</dbReference>
<dbReference type="EMBL" id="AB107312">
    <property type="protein sequence ID" value="BAC67617.1"/>
    <property type="molecule type" value="mRNA"/>
</dbReference>
<dbReference type="EMBL" id="AB107318">
    <property type="protein sequence ID" value="BAC67623.1"/>
    <property type="molecule type" value="mRNA"/>
</dbReference>
<dbReference type="EMBL" id="AB107324">
    <property type="protein sequence ID" value="BAC67629.1"/>
    <property type="molecule type" value="mRNA"/>
</dbReference>
<dbReference type="EMBL" id="AB107332">
    <property type="protein sequence ID" value="BAC67637.1"/>
    <property type="molecule type" value="mRNA"/>
</dbReference>
<dbReference type="EMBL" id="AB107338">
    <property type="protein sequence ID" value="BAC67643.1"/>
    <property type="molecule type" value="mRNA"/>
</dbReference>
<dbReference type="EMBL" id="AB107344">
    <property type="protein sequence ID" value="BAC67649.1"/>
    <property type="molecule type" value="mRNA"/>
</dbReference>
<dbReference type="EMBL" id="AE013599">
    <property type="protein sequence ID" value="AAF58777.2"/>
    <property type="molecule type" value="Genomic_DNA"/>
</dbReference>
<dbReference type="EMBL" id="AE013599">
    <property type="protein sequence ID" value="AAO41431.1"/>
    <property type="molecule type" value="Genomic_DNA"/>
</dbReference>
<dbReference type="EMBL" id="AE013599">
    <property type="protein sequence ID" value="AAS64877.1"/>
    <property type="molecule type" value="Genomic_DNA"/>
</dbReference>
<dbReference type="RefSeq" id="NP_724945.1">
    <molecule id="P42284-3"/>
    <property type="nucleotide sequence ID" value="NM_170617.5"/>
</dbReference>
<dbReference type="RefSeq" id="NP_788320.1">
    <molecule id="P42284-1"/>
    <property type="nucleotide sequence ID" value="NM_176140.4"/>
</dbReference>
<dbReference type="RefSeq" id="NP_995807.1">
    <molecule id="P42284-2"/>
    <property type="nucleotide sequence ID" value="NM_206085.4"/>
</dbReference>
<dbReference type="SMR" id="P42284"/>
<dbReference type="BioGRID" id="69126">
    <property type="interactions" value="58"/>
</dbReference>
<dbReference type="DNASU" id="44548"/>
<dbReference type="EnsemblMetazoa" id="FBtr0089346">
    <molecule id="P42284-3"/>
    <property type="protein sequence ID" value="FBpp0088380"/>
    <property type="gene ID" value="FBgn0283521"/>
</dbReference>
<dbReference type="EnsemblMetazoa" id="FBtr0089362">
    <molecule id="P42284-1"/>
    <property type="protein sequence ID" value="FBpp0088396"/>
    <property type="gene ID" value="FBgn0283521"/>
</dbReference>
<dbReference type="EnsemblMetazoa" id="FBtr0089363">
    <molecule id="P42284-2"/>
    <property type="protein sequence ID" value="FBpp0088949"/>
    <property type="gene ID" value="FBgn0283521"/>
</dbReference>
<dbReference type="GeneID" id="44548"/>
<dbReference type="AGR" id="FB:FBgn0283521"/>
<dbReference type="CTD" id="44548"/>
<dbReference type="FlyBase" id="FBgn0283521">
    <property type="gene designation" value="lola"/>
</dbReference>
<dbReference type="VEuPathDB" id="VectorBase:FBgn0283521"/>
<dbReference type="GeneTree" id="ENSGT00940000174551"/>
<dbReference type="OrthoDB" id="407106at2759"/>
<dbReference type="BioGRID-ORCS" id="44548">
    <property type="hits" value="1 hit in 1 CRISPR screen"/>
</dbReference>
<dbReference type="ChiTaRS" id="lola">
    <property type="organism name" value="fly"/>
</dbReference>
<dbReference type="GenomeRNAi" id="44548"/>
<dbReference type="Proteomes" id="UP000000803">
    <property type="component" value="Chromosome 2R"/>
</dbReference>
<dbReference type="Bgee" id="FBgn0283521">
    <property type="expression patterns" value="Expressed in adult differentiating enterocyte in digestive tract and 312 other cell types or tissues"/>
</dbReference>
<dbReference type="ExpressionAtlas" id="P42284">
    <property type="expression patterns" value="baseline and differential"/>
</dbReference>
<dbReference type="GO" id="GO:0005654">
    <property type="term" value="C:nucleoplasm"/>
    <property type="evidence" value="ECO:0007005"/>
    <property type="project" value="FlyBase"/>
</dbReference>
<dbReference type="GO" id="GO:0005634">
    <property type="term" value="C:nucleus"/>
    <property type="evidence" value="ECO:0000314"/>
    <property type="project" value="UniProtKB"/>
</dbReference>
<dbReference type="GO" id="GO:0003700">
    <property type="term" value="F:DNA-binding transcription factor activity"/>
    <property type="evidence" value="ECO:0000250"/>
    <property type="project" value="FlyBase"/>
</dbReference>
<dbReference type="GO" id="GO:0007411">
    <property type="term" value="P:axon guidance"/>
    <property type="evidence" value="ECO:0000315"/>
    <property type="project" value="UniProtKB"/>
</dbReference>
<dbReference type="GO" id="GO:0016199">
    <property type="term" value="P:axon midline choice point recognition"/>
    <property type="evidence" value="ECO:0000315"/>
    <property type="project" value="UniProtKB"/>
</dbReference>
<dbReference type="GO" id="GO:0007409">
    <property type="term" value="P:axonogenesis"/>
    <property type="evidence" value="ECO:0000315"/>
    <property type="project" value="UniProtKB"/>
</dbReference>
<dbReference type="GO" id="GO:0048813">
    <property type="term" value="P:dendrite morphogenesis"/>
    <property type="evidence" value="ECO:0000315"/>
    <property type="project" value="FlyBase"/>
</dbReference>
<dbReference type="GO" id="GO:0008406">
    <property type="term" value="P:gonad development"/>
    <property type="evidence" value="ECO:0000315"/>
    <property type="project" value="FlyBase"/>
</dbReference>
<dbReference type="GO" id="GO:0035167">
    <property type="term" value="P:larval lymph gland hemopoiesis"/>
    <property type="evidence" value="ECO:0000315"/>
    <property type="project" value="FlyBase"/>
</dbReference>
<dbReference type="GO" id="GO:0007526">
    <property type="term" value="P:larval somatic muscle development"/>
    <property type="evidence" value="ECO:0000315"/>
    <property type="project" value="FlyBase"/>
</dbReference>
<dbReference type="GO" id="GO:0045476">
    <property type="term" value="P:nurse cell apoptotic process"/>
    <property type="evidence" value="ECO:0000315"/>
    <property type="project" value="FlyBase"/>
</dbReference>
<dbReference type="GO" id="GO:0045893">
    <property type="term" value="P:positive regulation of DNA-templated transcription"/>
    <property type="evidence" value="ECO:0000250"/>
    <property type="project" value="UniProtKB"/>
</dbReference>
<dbReference type="GO" id="GO:0007464">
    <property type="term" value="P:R3/R4 cell fate commitment"/>
    <property type="evidence" value="ECO:0000315"/>
    <property type="project" value="FlyBase"/>
</dbReference>
<dbReference type="GO" id="GO:0045467">
    <property type="term" value="P:R7 cell development"/>
    <property type="evidence" value="ECO:0000315"/>
    <property type="project" value="FlyBase"/>
</dbReference>
<dbReference type="GO" id="GO:0006355">
    <property type="term" value="P:regulation of DNA-templated transcription"/>
    <property type="evidence" value="ECO:0000315"/>
    <property type="project" value="FlyBase"/>
</dbReference>
<dbReference type="GO" id="GO:0006357">
    <property type="term" value="P:regulation of transcription by RNA polymerase II"/>
    <property type="evidence" value="ECO:0000318"/>
    <property type="project" value="GO_Central"/>
</dbReference>
<dbReference type="CDD" id="cd18315">
    <property type="entry name" value="BTB_POZ_BAB-like"/>
    <property type="match status" value="1"/>
</dbReference>
<dbReference type="FunFam" id="3.30.710.10:FF:000091">
    <property type="entry name" value="Lola, isoform F"/>
    <property type="match status" value="1"/>
</dbReference>
<dbReference type="Gene3D" id="3.30.710.10">
    <property type="entry name" value="Potassium Channel Kv1.1, Chain A"/>
    <property type="match status" value="1"/>
</dbReference>
<dbReference type="InterPro" id="IPR000210">
    <property type="entry name" value="BTB/POZ_dom"/>
</dbReference>
<dbReference type="InterPro" id="IPR051095">
    <property type="entry name" value="Dros_DevTransReg"/>
</dbReference>
<dbReference type="InterPro" id="IPR011333">
    <property type="entry name" value="SKP1/BTB/POZ_sf"/>
</dbReference>
<dbReference type="PANTHER" id="PTHR23110">
    <property type="entry name" value="BTB DOMAIN TRANSCRIPTION FACTOR"/>
    <property type="match status" value="1"/>
</dbReference>
<dbReference type="PANTHER" id="PTHR23110:SF111">
    <property type="entry name" value="LONGITUDINALS LACKING PROTEIN, ISOFORMS F_I_K_T"/>
    <property type="match status" value="1"/>
</dbReference>
<dbReference type="Pfam" id="PF00651">
    <property type="entry name" value="BTB"/>
    <property type="match status" value="1"/>
</dbReference>
<dbReference type="SMART" id="SM00225">
    <property type="entry name" value="BTB"/>
    <property type="match status" value="1"/>
</dbReference>
<dbReference type="SUPFAM" id="SSF54695">
    <property type="entry name" value="POZ domain"/>
    <property type="match status" value="1"/>
</dbReference>
<dbReference type="PROSITE" id="PS50097">
    <property type="entry name" value="BTB"/>
    <property type="match status" value="1"/>
</dbReference>
<gene>
    <name evidence="10" type="primary">lola</name>
    <name evidence="10" type="ORF">CG12052</name>
</gene>
<organism>
    <name type="scientific">Drosophila melanogaster</name>
    <name type="common">Fruit fly</name>
    <dbReference type="NCBI Taxonomy" id="7227"/>
    <lineage>
        <taxon>Eukaryota</taxon>
        <taxon>Metazoa</taxon>
        <taxon>Ecdysozoa</taxon>
        <taxon>Arthropoda</taxon>
        <taxon>Hexapoda</taxon>
        <taxon>Insecta</taxon>
        <taxon>Pterygota</taxon>
        <taxon>Neoptera</taxon>
        <taxon>Endopterygota</taxon>
        <taxon>Diptera</taxon>
        <taxon>Brachycera</taxon>
        <taxon>Muscomorpha</taxon>
        <taxon>Ephydroidea</taxon>
        <taxon>Drosophilidae</taxon>
        <taxon>Drosophila</taxon>
        <taxon>Sophophora</taxon>
    </lineage>
</organism>
<keyword id="KW-0025">Alternative splicing</keyword>
<keyword id="KW-0217">Developmental protein</keyword>
<keyword id="KW-0221">Differentiation</keyword>
<keyword id="KW-0524">Neurogenesis</keyword>
<keyword id="KW-0539">Nucleus</keyword>
<keyword id="KW-1185">Reference proteome</keyword>
<keyword id="KW-0804">Transcription</keyword>
<keyword id="KW-0805">Transcription regulation</keyword>
<sequence>MDDDQQFCLRWNNHQSTLISVFDTLLENETLVDCTLAAEGKFLKAHKVVLSACSPYFATLLQEQYDKHPIFILKDVKYQELRAMMDYMYRGEVNISQDQLAALLKAAESLQIKGLSDNRTGGGVAPKPESSGHHRGGKLSGAYTLEQTKRARLATGGAMDTSGDVSGSREGSSSPSRRRRKVRRRSMENDAHDNSNSSVLQAAASNQSILQQTGAGLAVSALVTTQLSSGPAAGTSSQASSTQQQQPLTSTNVTKKTESAKLTSSTAAPASGASASAAVQQAHLHQQQAQTTSDAINTENVQAQSQGGAQGVQGDDEDIDEGSAVGGPNSATGPNPASASASAVHAGVVVKQLASVVDKSSSNHKHKIKDNSVSSVGSEMVIEPKAEYDDDAHDENVEDLTLDEEDMTMEELDQTAGTSQGGEGSSQTYATWQHDRSQDELGLMAQDAQQRDPQDVSTNQTVVLPHYSIYHYYSNIYYLLSHTTIYEADRTVSVSCPGKLNCLPQRNDLQETKSVTVLYTIHFFLYILMIYIFVLCKILPRIVFVWVST</sequence>
<name>LOLA2_DROME</name>